<name>PATH1_ARATH</name>
<keyword id="KW-0131">Cell cycle</keyword>
<keyword id="KW-0132">Cell division</keyword>
<keyword id="KW-0507">mRNA processing</keyword>
<keyword id="KW-1185">Reference proteome</keyword>
<comment type="function">
    <text evidence="1 3">Activator of mRNA decapping. Involved in mRNA decay via decapping (By similarity). Involved in the regulation of root stem cell niche identity. Maintains root stem cell niche stability through the interaction with the negative regulator of jasmonate signaling AFPH2/NINJA, and the regulation of cell division (PubMed:26956135).</text>
</comment>
<comment type="subunit">
    <text evidence="3">Interacts with AFPH2/NINJA.</text>
</comment>
<comment type="tissue specificity">
    <text evidence="3">Expressed in root vasculature, shoot apical meristem (SAM) and leaves.</text>
</comment>
<comment type="disruption phenotype">
    <text evidence="3">Enhanced root distal stem cell differentiation and increased mitotic activity in root quiescent center.</text>
</comment>
<comment type="sequence caution" evidence="5">
    <conflict type="erroneous gene model prediction">
        <sequence resource="EMBL-CDS" id="BAB01945"/>
    </conflict>
</comment>
<protein>
    <recommendedName>
        <fullName evidence="5">Protein PAT1 homolog 1</fullName>
        <shortName evidence="5">AtPAT1H1</shortName>
    </recommendedName>
    <alternativeName>
        <fullName evidence="4">Protein ROOT STEM CELL DEFECTIVE 2</fullName>
    </alternativeName>
</protein>
<reference key="1">
    <citation type="journal article" date="2000" name="DNA Res.">
        <title>Structural analysis of Arabidopsis thaliana chromosome 3. II. Sequence features of the 4,251,695 bp regions covered by 90 P1, TAC and BAC clones.</title>
        <authorList>
            <person name="Kaneko T."/>
            <person name="Katoh T."/>
            <person name="Sato S."/>
            <person name="Nakamura Y."/>
            <person name="Asamizu E."/>
            <person name="Tabata S."/>
        </authorList>
    </citation>
    <scope>NUCLEOTIDE SEQUENCE [LARGE SCALE GENOMIC DNA]</scope>
    <source>
        <strain>cv. Columbia</strain>
    </source>
</reference>
<reference key="2">
    <citation type="journal article" date="2017" name="Plant J.">
        <title>Araport11: a complete reannotation of the Arabidopsis thaliana reference genome.</title>
        <authorList>
            <person name="Cheng C.Y."/>
            <person name="Krishnakumar V."/>
            <person name="Chan A.P."/>
            <person name="Thibaud-Nissen F."/>
            <person name="Schobel S."/>
            <person name="Town C.D."/>
        </authorList>
    </citation>
    <scope>GENOME REANNOTATION</scope>
    <source>
        <strain>cv. Columbia</strain>
    </source>
</reference>
<reference key="3">
    <citation type="submission" date="2006-07" db="EMBL/GenBank/DDBJ databases">
        <title>Large-scale analysis of RIKEN Arabidopsis full-length (RAFL) cDNAs.</title>
        <authorList>
            <person name="Totoki Y."/>
            <person name="Seki M."/>
            <person name="Ishida J."/>
            <person name="Nakajima M."/>
            <person name="Enju A."/>
            <person name="Kamiya A."/>
            <person name="Narusaka M."/>
            <person name="Shin-i T."/>
            <person name="Nakagawa M."/>
            <person name="Sakamoto N."/>
            <person name="Oishi K."/>
            <person name="Kohara Y."/>
            <person name="Kobayashi M."/>
            <person name="Toyoda A."/>
            <person name="Sakaki Y."/>
            <person name="Sakurai T."/>
            <person name="Iida K."/>
            <person name="Akiyama K."/>
            <person name="Satou M."/>
            <person name="Toyoda T."/>
            <person name="Konagaya A."/>
            <person name="Carninci P."/>
            <person name="Kawai J."/>
            <person name="Hayashizaki Y."/>
            <person name="Shinozaki K."/>
        </authorList>
    </citation>
    <scope>NUCLEOTIDE SEQUENCE [LARGE SCALE MRNA]</scope>
    <source>
        <strain>cv. Columbia</strain>
    </source>
</reference>
<reference key="4">
    <citation type="journal article" date="2016" name="Plant Cell Rep.">
        <title>Topoisomerase II-associated protein PAT1H1 is involved in the root stem cell niche maintenance in Arabidopsis thaliana.</title>
        <authorList>
            <person name="Yu Q."/>
            <person name="Liu J."/>
            <person name="Zheng H."/>
            <person name="Jia Y."/>
            <person name="Tian H."/>
            <person name="Ding Z."/>
        </authorList>
    </citation>
    <scope>FUNCTION</scope>
    <scope>INTERACTION WITH AFPH2/NINJA</scope>
    <scope>TISSUE SPECIFICITY</scope>
    <scope>DISRUPTION PHENOTYPE</scope>
</reference>
<dbReference type="EMBL" id="AP002046">
    <property type="protein sequence ID" value="BAB01945.1"/>
    <property type="status" value="ALT_SEQ"/>
    <property type="molecule type" value="Genomic_DNA"/>
</dbReference>
<dbReference type="EMBL" id="CP002686">
    <property type="protein sequence ID" value="AEE76616.1"/>
    <property type="molecule type" value="Genomic_DNA"/>
</dbReference>
<dbReference type="EMBL" id="AK228960">
    <property type="protein sequence ID" value="BAF00849.1"/>
    <property type="molecule type" value="mRNA"/>
</dbReference>
<dbReference type="RefSeq" id="NP_188866.1">
    <property type="nucleotide sequence ID" value="NM_113125.4"/>
</dbReference>
<dbReference type="ComplexPortal" id="CPX-1391">
    <property type="entry name" value="LSM1-7-PAT1 complex, variant LSM1A-LSM3A-LSM6A-PAT1H1"/>
</dbReference>
<dbReference type="ComplexPortal" id="CPX-1392">
    <property type="entry name" value="LSM1-7-PAT1 complex, variant LSM1A-LSM3A-LSM6B-PAT1H1"/>
</dbReference>
<dbReference type="ComplexPortal" id="CPX-1393">
    <property type="entry name" value="LSM1-7-PAT1 complex, variant LSM1A-LSM3B-LSM6A-PAT1H1"/>
</dbReference>
<dbReference type="ComplexPortal" id="CPX-1394">
    <property type="entry name" value="LSM1-7-PAT1 complex, variant LSM1A-LSM3B-LSM6B-PAT1H1"/>
</dbReference>
<dbReference type="ComplexPortal" id="CPX-1395">
    <property type="entry name" value="LSM1-7-PAT1 complex, variant LSM1B-LSM3A-LSM6A-PAT1H1"/>
</dbReference>
<dbReference type="ComplexPortal" id="CPX-1396">
    <property type="entry name" value="LSM1-7-PAT1 complex, variant LSM1B-LSM3A-LSM6B-PAT1H1"/>
</dbReference>
<dbReference type="ComplexPortal" id="CPX-1397">
    <property type="entry name" value="LSM1-7-PAT1 complex, variant LSM1B-LSM3B-LSM6A-PAT1H1"/>
</dbReference>
<dbReference type="ComplexPortal" id="CPX-1398">
    <property type="entry name" value="LSM1-7-PAT1 complex, variant LSM1B-LSM3B-LSM6B-PAT1H1"/>
</dbReference>
<dbReference type="FunCoup" id="F4J077">
    <property type="interactions" value="2203"/>
</dbReference>
<dbReference type="STRING" id="3702.F4J077"/>
<dbReference type="GlyGen" id="F4J077">
    <property type="glycosylation" value="2 sites, 1 O-linked glycan (2 sites)"/>
</dbReference>
<dbReference type="iPTMnet" id="F4J077"/>
<dbReference type="PaxDb" id="3702-AT3G22270.1"/>
<dbReference type="ProteomicsDB" id="236706"/>
<dbReference type="EnsemblPlants" id="AT3G22270.1">
    <property type="protein sequence ID" value="AT3G22270.1"/>
    <property type="gene ID" value="AT3G22270"/>
</dbReference>
<dbReference type="GeneID" id="821797"/>
<dbReference type="Gramene" id="AT3G22270.1">
    <property type="protein sequence ID" value="AT3G22270.1"/>
    <property type="gene ID" value="AT3G22270"/>
</dbReference>
<dbReference type="KEGG" id="ath:AT3G22270"/>
<dbReference type="Araport" id="AT3G22270"/>
<dbReference type="TAIR" id="AT3G22270">
    <property type="gene designation" value="PAT1H1"/>
</dbReference>
<dbReference type="eggNOG" id="ENOG502QQ60">
    <property type="taxonomic scope" value="Eukaryota"/>
</dbReference>
<dbReference type="HOGENOM" id="CLU_021130_0_0_1"/>
<dbReference type="InParanoid" id="F4J077"/>
<dbReference type="OMA" id="ESNVPQF"/>
<dbReference type="OrthoDB" id="74835at2759"/>
<dbReference type="PRO" id="PR:F4J077"/>
<dbReference type="Proteomes" id="UP000006548">
    <property type="component" value="Chromosome 3"/>
</dbReference>
<dbReference type="ExpressionAtlas" id="F4J077">
    <property type="expression patterns" value="baseline and differential"/>
</dbReference>
<dbReference type="GO" id="GO:0005783">
    <property type="term" value="C:endoplasmic reticulum"/>
    <property type="evidence" value="ECO:0000314"/>
    <property type="project" value="TAIR"/>
</dbReference>
<dbReference type="GO" id="GO:1990726">
    <property type="term" value="C:Lsm1-7-Pat1 complex"/>
    <property type="evidence" value="ECO:0000303"/>
    <property type="project" value="ComplexPortal"/>
</dbReference>
<dbReference type="GO" id="GO:0005634">
    <property type="term" value="C:nucleus"/>
    <property type="evidence" value="ECO:0000314"/>
    <property type="project" value="TAIR"/>
</dbReference>
<dbReference type="GO" id="GO:0000932">
    <property type="term" value="C:P-body"/>
    <property type="evidence" value="ECO:0000303"/>
    <property type="project" value="ComplexPortal"/>
</dbReference>
<dbReference type="GO" id="GO:0051301">
    <property type="term" value="P:cell division"/>
    <property type="evidence" value="ECO:0007669"/>
    <property type="project" value="UniProtKB-KW"/>
</dbReference>
<dbReference type="GO" id="GO:0000290">
    <property type="term" value="P:deadenylation-dependent decapping of nuclear-transcribed mRNA"/>
    <property type="evidence" value="ECO:0000303"/>
    <property type="project" value="ComplexPortal"/>
</dbReference>
<dbReference type="GO" id="GO:0006397">
    <property type="term" value="P:mRNA processing"/>
    <property type="evidence" value="ECO:0007669"/>
    <property type="project" value="UniProtKB-KW"/>
</dbReference>
<dbReference type="GO" id="GO:0019827">
    <property type="term" value="P:stem cell population maintenance"/>
    <property type="evidence" value="ECO:0000315"/>
    <property type="project" value="TAIR"/>
</dbReference>
<dbReference type="InterPro" id="IPR039900">
    <property type="entry name" value="Pat1-like"/>
</dbReference>
<dbReference type="PANTHER" id="PTHR21551:SF11">
    <property type="entry name" value="PROTEIN PAT1 HOMOLOG 1"/>
    <property type="match status" value="1"/>
</dbReference>
<dbReference type="PANTHER" id="PTHR21551">
    <property type="entry name" value="TOPOISOMERASE II-ASSOCIATED PROTEIN PAT1"/>
    <property type="match status" value="1"/>
</dbReference>
<proteinExistence type="evidence at protein level"/>
<feature type="chain" id="PRO_0000442789" description="Protein PAT1 homolog 1">
    <location>
        <begin position="1"/>
        <end position="782"/>
    </location>
</feature>
<feature type="region of interest" description="Disordered" evidence="2">
    <location>
        <begin position="96"/>
        <end position="153"/>
    </location>
</feature>
<feature type="region of interest" description="Disordered" evidence="2">
    <location>
        <begin position="177"/>
        <end position="217"/>
    </location>
</feature>
<feature type="region of interest" description="Disordered" evidence="2">
    <location>
        <begin position="332"/>
        <end position="372"/>
    </location>
</feature>
<feature type="region of interest" description="Disordered" evidence="2">
    <location>
        <begin position="460"/>
        <end position="481"/>
    </location>
</feature>
<feature type="compositionally biased region" description="Low complexity" evidence="2">
    <location>
        <begin position="108"/>
        <end position="117"/>
    </location>
</feature>
<feature type="compositionally biased region" description="Polar residues" evidence="2">
    <location>
        <begin position="208"/>
        <end position="217"/>
    </location>
</feature>
<feature type="compositionally biased region" description="Basic residues" evidence="2">
    <location>
        <begin position="335"/>
        <end position="347"/>
    </location>
</feature>
<feature type="compositionally biased region" description="Polar residues" evidence="2">
    <location>
        <begin position="348"/>
        <end position="366"/>
    </location>
</feature>
<feature type="compositionally biased region" description="Basic and acidic residues" evidence="2">
    <location>
        <begin position="471"/>
        <end position="481"/>
    </location>
</feature>
<feature type="sequence conflict" description="In Ref. 3; BAF00849." evidence="5" ref="3">
    <original>T</original>
    <variation>K</variation>
    <location>
        <position position="623"/>
    </location>
</feature>
<evidence type="ECO:0000250" key="1">
    <source>
        <dbReference type="UniProtKB" id="Q0WPK4"/>
    </source>
</evidence>
<evidence type="ECO:0000256" key="2">
    <source>
        <dbReference type="SAM" id="MobiDB-lite"/>
    </source>
</evidence>
<evidence type="ECO:0000269" key="3">
    <source>
    </source>
</evidence>
<evidence type="ECO:0000303" key="4">
    <source>
    </source>
</evidence>
<evidence type="ECO:0000305" key="5"/>
<evidence type="ECO:0000312" key="6">
    <source>
        <dbReference type="Araport" id="AT3G22270"/>
    </source>
</evidence>
<organism>
    <name type="scientific">Arabidopsis thaliana</name>
    <name type="common">Mouse-ear cress</name>
    <dbReference type="NCBI Taxonomy" id="3702"/>
    <lineage>
        <taxon>Eukaryota</taxon>
        <taxon>Viridiplantae</taxon>
        <taxon>Streptophyta</taxon>
        <taxon>Embryophyta</taxon>
        <taxon>Tracheophyta</taxon>
        <taxon>Spermatophyta</taxon>
        <taxon>Magnoliopsida</taxon>
        <taxon>eudicotyledons</taxon>
        <taxon>Gunneridae</taxon>
        <taxon>Pentapetalae</taxon>
        <taxon>rosids</taxon>
        <taxon>malvids</taxon>
        <taxon>Brassicales</taxon>
        <taxon>Brassicaceae</taxon>
        <taxon>Camelineae</taxon>
        <taxon>Arabidopsis</taxon>
    </lineage>
</organism>
<sequence>MERSDSRDLYNFVRASSLDKNSTLFDASQYEFFGQNLDDMELGGLDDDGVIAPVLGHADDDEYHLFDKGEGAGLGSLSDMDDLATTFAKLNRVVTGPKHPGVIGDRGSGSFSRESSSATDWTQDAELTSWLDEQDQEAKRWSSQPQSFAHSKPLYRTSSYPQQQPQLQHYNSEPIILPESNFTSFPPPGNRSPQASPGNLHRAPSLPGGSQLTYSAPSPLSNSGFHLSGLSQGPHYGGNLTRYASCGPTLGNMVQPHWVTDPGHLHGDHSGLLHNLVQQQHQQLPPRNAIMSQHLLALQQRQSYAQLAALQSQLYSSYPSPSRKVPFGVGEVREHKHKSSHRSRKNRGLSQQTSDAASQKSETGLQFRSKHMTSEEIESILKMQHSNSHSNDPYVNDYYHQAKLAKKSAGSKAISHFYPAQLKDHQPRSRNSSEQHPQVHVDALGKITLPSVRRPHALLEVDSSPGFNDGSGDHKGSGKHLEQEPLVAARVTIEDALGVLIDIVDIDRTLQNTRPQDGGAQLKRKRQILLEGLATALQLADPFSKTGQKSGMTAKDDIVFLRIATLPKGRKLLTKYLQLLVPGTENARVVCMAIFRHLRFLFGGLPSDTLAAETISNLAKAVTVCVQAMDLRALSACLAAVVCSSEQPPLRPIGSSAGDGASVVLISLLERAAEVVVVPRVMHGNSNDGLWRASFDEFFNLLTKYCRSKYDTIRGQNQGSAADVLELAIKREMPAELLRASLRHTNDDQRNYLLNFGRKPSAISESASHARGGQINSESVRG</sequence>
<gene>
    <name evidence="4" type="primary">PAT1H1</name>
    <name evidence="4" type="synonym">RSD2</name>
    <name evidence="6" type="ordered locus">At3g22270</name>
</gene>
<accession>F4J077</accession>
<accession>Q0WPV0</accession>
<accession>Q9LHJ0</accession>